<evidence type="ECO:0000250" key="1"/>
<evidence type="ECO:0000250" key="2">
    <source>
        <dbReference type="UniProtKB" id="P03428"/>
    </source>
</evidence>
<evidence type="ECO:0000305" key="3"/>
<comment type="function">
    <text evidence="2">Plays an essential role in transcription initiation and cap-stealing mechanism, in which cellular capped pre-mRNAs are used to generate primers for viral transcription. Binds the cap of the target pre-RNA which is subsequently cleaved after 10-13 nucleotides by PA. Plays a role in the initiation of the viral genome replication and modulates the activity of the ribonucleoprotein (RNP) complex. In addition, participates in the inhibition of type I interferon induction through interaction with the host mitochondrial antiviral signaling protein MAVS.</text>
</comment>
<comment type="subunit">
    <text evidence="2">Influenza RNA polymerase is composed of three subunits: PB1, PB2 and PA. Interacts (via N-terminus) with PB1 (via C-terminus). Interacts with nucleoprotein NP (via N-terminus). Interacts (via N-terminus) with host MAVS (via N-terminus); this interaction inhibits host innate immune response.</text>
</comment>
<comment type="subcellular location">
    <subcellularLocation>
        <location>Virion</location>
    </subcellularLocation>
    <subcellularLocation>
        <location evidence="2">Host nucleus</location>
    </subcellularLocation>
    <subcellularLocation>
        <location evidence="2">Host mitochondrion</location>
    </subcellularLocation>
</comment>
<comment type="similarity">
    <text evidence="3">Belongs to the influenza viruses PB2 family.</text>
</comment>
<organism>
    <name type="scientific">Influenza A virus (strain A/Chicken/Hong Kong/715.5/2001 H5N1 genotype E)</name>
    <dbReference type="NCBI Taxonomy" id="196434"/>
    <lineage>
        <taxon>Viruses</taxon>
        <taxon>Riboviria</taxon>
        <taxon>Orthornavirae</taxon>
        <taxon>Negarnaviricota</taxon>
        <taxon>Polyploviricotina</taxon>
        <taxon>Insthoviricetes</taxon>
        <taxon>Articulavirales</taxon>
        <taxon>Orthomyxoviridae</taxon>
        <taxon>Alphainfluenzavirus</taxon>
        <taxon>Alphainfluenzavirus influenzae</taxon>
        <taxon>Influenza A virus</taxon>
    </lineage>
</organism>
<name>PB2_I01A3</name>
<organismHost>
    <name type="scientific">Aves</name>
    <dbReference type="NCBI Taxonomy" id="8782"/>
</organismHost>
<organismHost>
    <name type="scientific">Felis catus</name>
    <name type="common">Cat</name>
    <name type="synonym">Felis silvestris catus</name>
    <dbReference type="NCBI Taxonomy" id="9685"/>
</organismHost>
<organismHost>
    <name type="scientific">Homo sapiens</name>
    <name type="common">Human</name>
    <dbReference type="NCBI Taxonomy" id="9606"/>
</organismHost>
<organismHost>
    <name type="scientific">Panthera pardus</name>
    <name type="common">Leopard</name>
    <name type="synonym">Felis pardus</name>
    <dbReference type="NCBI Taxonomy" id="9691"/>
</organismHost>
<organismHost>
    <name type="scientific">Panthera tigris</name>
    <name type="common">Tiger</name>
    <dbReference type="NCBI Taxonomy" id="9694"/>
</organismHost>
<organismHost>
    <name type="scientific">Sus scrofa</name>
    <name type="common">Pig</name>
    <dbReference type="NCBI Taxonomy" id="9823"/>
</organismHost>
<reference key="1">
    <citation type="journal article" date="2002" name="Proc. Natl. Acad. Sci. U.S.A.">
        <title>Emergence of multiple genotypes of H5N1 avian influenza viruses in Hong Kong SAR.</title>
        <authorList>
            <person name="Guan Y."/>
            <person name="Peiris J.S.M."/>
            <person name="Lipatov A.S."/>
            <person name="Ellis T.M."/>
            <person name="Dyrting K.C."/>
            <person name="Krauss S."/>
            <person name="Zhang L.J."/>
            <person name="Webster R.G."/>
            <person name="Shortridge K.F."/>
        </authorList>
    </citation>
    <scope>NUCLEOTIDE SEQUENCE [GENOMIC RNA]</scope>
</reference>
<reference key="2">
    <citation type="submission" date="2008-03" db="EMBL/GenBank/DDBJ databases">
        <authorList>
            <person name="Li K.S."/>
            <person name="Xu K.M."/>
            <person name="Guan Y."/>
        </authorList>
    </citation>
    <scope>SEQUENCE REVISION</scope>
</reference>
<dbReference type="EMBL" id="AF509152">
    <property type="protein sequence ID" value="AAO52995.2"/>
    <property type="molecule type" value="Genomic_DNA"/>
</dbReference>
<dbReference type="SMR" id="Q809P5"/>
<dbReference type="GO" id="GO:0033650">
    <property type="term" value="C:host cell mitochondrion"/>
    <property type="evidence" value="ECO:0007669"/>
    <property type="project" value="UniProtKB-SubCell"/>
</dbReference>
<dbReference type="GO" id="GO:0042025">
    <property type="term" value="C:host cell nucleus"/>
    <property type="evidence" value="ECO:0007669"/>
    <property type="project" value="UniProtKB-SubCell"/>
</dbReference>
<dbReference type="GO" id="GO:0044423">
    <property type="term" value="C:virion component"/>
    <property type="evidence" value="ECO:0007669"/>
    <property type="project" value="UniProtKB-KW"/>
</dbReference>
<dbReference type="GO" id="GO:0003723">
    <property type="term" value="F:RNA binding"/>
    <property type="evidence" value="ECO:0007669"/>
    <property type="project" value="InterPro"/>
</dbReference>
<dbReference type="GO" id="GO:0006370">
    <property type="term" value="P:7-methylguanosine mRNA capping"/>
    <property type="evidence" value="ECO:0007669"/>
    <property type="project" value="UniProtKB-KW"/>
</dbReference>
<dbReference type="GO" id="GO:0075526">
    <property type="term" value="P:cap snatching"/>
    <property type="evidence" value="ECO:0007669"/>
    <property type="project" value="UniProtKB-KW"/>
</dbReference>
<dbReference type="GO" id="GO:0006351">
    <property type="term" value="P:DNA-templated transcription"/>
    <property type="evidence" value="ECO:0007669"/>
    <property type="project" value="InterPro"/>
</dbReference>
<dbReference type="GO" id="GO:0039545">
    <property type="term" value="P:symbiont-mediated suppression of host cytoplasmic pattern recognition receptor signaling pathway via inhibition of MAVS activity"/>
    <property type="evidence" value="ECO:0007669"/>
    <property type="project" value="UniProtKB-KW"/>
</dbReference>
<dbReference type="GO" id="GO:0039657">
    <property type="term" value="P:symbiont-mediated suppression of host gene expression"/>
    <property type="evidence" value="ECO:0007669"/>
    <property type="project" value="UniProtKB-KW"/>
</dbReference>
<dbReference type="GO" id="GO:0039523">
    <property type="term" value="P:symbiont-mediated suppression of host mRNA transcription via inhibition of RNA polymerase II activity"/>
    <property type="evidence" value="ECO:0007669"/>
    <property type="project" value="UniProtKB-KW"/>
</dbReference>
<dbReference type="Gene3D" id="3.30.30.90">
    <property type="entry name" value="Polymerase Basic Protein 2, C-terminal domain"/>
    <property type="match status" value="1"/>
</dbReference>
<dbReference type="InterPro" id="IPR049110">
    <property type="entry name" value="Flu_PB2_2nd"/>
</dbReference>
<dbReference type="InterPro" id="IPR049114">
    <property type="entry name" value="Flu_PB2_6th"/>
</dbReference>
<dbReference type="InterPro" id="IPR049115">
    <property type="entry name" value="Flu_PB2_C"/>
</dbReference>
<dbReference type="InterPro" id="IPR048298">
    <property type="entry name" value="Flu_PB2_CAP-bd"/>
</dbReference>
<dbReference type="InterPro" id="IPR049111">
    <property type="entry name" value="Flu_PB2_middle"/>
</dbReference>
<dbReference type="InterPro" id="IPR049106">
    <property type="entry name" value="Flu_PB2_N"/>
</dbReference>
<dbReference type="InterPro" id="IPR049113">
    <property type="entry name" value="PB2_helical"/>
</dbReference>
<dbReference type="InterPro" id="IPR037258">
    <property type="entry name" value="PDB2_C"/>
</dbReference>
<dbReference type="Pfam" id="PF20947">
    <property type="entry name" value="Flu_PB2_1st"/>
    <property type="match status" value="1"/>
</dbReference>
<dbReference type="Pfam" id="PF20948">
    <property type="entry name" value="Flu_PB2_2nd"/>
    <property type="match status" value="1"/>
</dbReference>
<dbReference type="Pfam" id="PF20949">
    <property type="entry name" value="Flu_PB2_3rd"/>
    <property type="match status" value="1"/>
</dbReference>
<dbReference type="Pfam" id="PF20950">
    <property type="entry name" value="Flu_PB2_4th"/>
    <property type="match status" value="1"/>
</dbReference>
<dbReference type="Pfam" id="PF00604">
    <property type="entry name" value="Flu_PB2_5th"/>
    <property type="match status" value="1"/>
</dbReference>
<dbReference type="Pfam" id="PF20951">
    <property type="entry name" value="Flu_PB2_6th"/>
    <property type="match status" value="1"/>
</dbReference>
<dbReference type="Pfam" id="PF20952">
    <property type="entry name" value="Flu_PB2_7th"/>
    <property type="match status" value="1"/>
</dbReference>
<dbReference type="SUPFAM" id="SSF160453">
    <property type="entry name" value="PB2 C-terminal domain-like"/>
    <property type="match status" value="1"/>
</dbReference>
<sequence>MERIKELRDLMSQSRTREILTKTTVDHMAIIKKYTSGRQEKNPALRMKWMMAMKYPITADKRIIEMIPERNEQGQTLWSKTNDAGSDRVMVSPLAVTWWNRNGPTTSAVHYPKVYKTYFEKVERLKHGTFGPVHFRNQVKIRRRVDINPGHADLSAKEAQDVIMEVVFPNEVGARILTSESQLTITKEKKEELQDCKIAPLMVAYMLERELVRKTRFLPVAGGTSSVYIEVLHLTQGTCWEQMYTPGGEVRNDDVDQSLIIAARNIVRRATVSADPLASLLEMCHSTQIGGIRMVDILRQNPTEEQAVDICKAAMGLRISSSFSFGGFTFKRTSGSSVKKEEEVLTGNLQTLKIRVHEGYEEFTMVGRRATAILRKATRRLIQLIVSGRDEQSIAEAIIVAMVFSQEDCMIKAVRGDLNFVNRANQRLNPMHQLLRHFQKDAKVLFQNWGIEPIDNVMGMIGILPDMTPSTEMSLRGVRVSKMGVDEYSSTERVVVSIDRFLRVRDQRGNVLLSPEEVSETQGTEKLTITYSSSMMWEINGPESVLVNTYQWIIRNWETVKIQWSQDPTMLYNKMEFEPFQSLVPKAARGQYSGFVRTLFQQMRDVLGTFDTVQIIKLLPFAAAPPEQSRMQFSSLTVNVRGSGMRILVRGNSPVFNYNKATKRLTVLGKDAGALTEDPDEGTAGVESAVLRGFLILGKEDKRYGPALSINELSNLAKGEKANVLIGQGDVVLVMKRKRDSS</sequence>
<accession>Q809P5</accession>
<proteinExistence type="inferred from homology"/>
<keyword id="KW-1157">Cap snatching</keyword>
<keyword id="KW-1262">Eukaryotic host gene expression shutoff by virus</keyword>
<keyword id="KW-1191">Eukaryotic host transcription shutoff by virus</keyword>
<keyword id="KW-1190">Host gene expression shutoff by virus</keyword>
<keyword id="KW-1045">Host mitochondrion</keyword>
<keyword id="KW-1048">Host nucleus</keyword>
<keyword id="KW-0945">Host-virus interaction</keyword>
<keyword id="KW-1090">Inhibition of host innate immune response by virus</keyword>
<keyword id="KW-1097">Inhibition of host MAVS by virus</keyword>
<keyword id="KW-1113">Inhibition of host RLR pathway by virus</keyword>
<keyword id="KW-1104">Inhibition of host RNA polymerase II by virus</keyword>
<keyword id="KW-0506">mRNA capping</keyword>
<keyword id="KW-0507">mRNA processing</keyword>
<keyword id="KW-0899">Viral immunoevasion</keyword>
<keyword id="KW-1195">Viral transcription</keyword>
<keyword id="KW-0946">Virion</keyword>
<feature type="chain" id="PRO_0000311147" description="Polymerase basic protein 2">
    <location>
        <begin position="1"/>
        <end position="742" status="greater than"/>
    </location>
</feature>
<feature type="short sequence motif" description="Nuclear localization signal" evidence="1">
    <location>
        <begin position="736"/>
        <end position="739"/>
    </location>
</feature>
<feature type="non-terminal residue">
    <location>
        <position position="742"/>
    </location>
</feature>
<gene>
    <name type="primary">PB2</name>
</gene>
<protein>
    <recommendedName>
        <fullName>Polymerase basic protein 2</fullName>
    </recommendedName>
    <alternativeName>
        <fullName>RNA-directed RNA polymerase subunit P3</fullName>
    </alternativeName>
</protein>